<name>Y3331_CYTH3</name>
<keyword id="KW-0997">Cell inner membrane</keyword>
<keyword id="KW-1003">Cell membrane</keyword>
<keyword id="KW-0472">Membrane</keyword>
<keyword id="KW-1185">Reference proteome</keyword>
<keyword id="KW-0812">Transmembrane</keyword>
<keyword id="KW-1133">Transmembrane helix</keyword>
<comment type="subcellular location">
    <subcellularLocation>
        <location evidence="1">Cell inner membrane</location>
        <topology evidence="1">Multi-pass membrane protein</topology>
    </subcellularLocation>
</comment>
<comment type="similarity">
    <text evidence="1">Belongs to the UPF0060 family.</text>
</comment>
<organism>
    <name type="scientific">Cytophaga hutchinsonii (strain ATCC 33406 / DSM 1761 / CIP 103989 / NBRC 15051 / NCIMB 9469 / D465)</name>
    <dbReference type="NCBI Taxonomy" id="269798"/>
    <lineage>
        <taxon>Bacteria</taxon>
        <taxon>Pseudomonadati</taxon>
        <taxon>Bacteroidota</taxon>
        <taxon>Cytophagia</taxon>
        <taxon>Cytophagales</taxon>
        <taxon>Cytophagaceae</taxon>
        <taxon>Cytophaga</taxon>
    </lineage>
</organism>
<evidence type="ECO:0000255" key="1">
    <source>
        <dbReference type="HAMAP-Rule" id="MF_00010"/>
    </source>
</evidence>
<protein>
    <recommendedName>
        <fullName evidence="1">UPF0060 membrane protein CHU_3331</fullName>
    </recommendedName>
</protein>
<accession>Q11PU6</accession>
<gene>
    <name type="ordered locus">CHU_3331</name>
</gene>
<sequence>MGNLFYFILAAFCEISGCYLFWLHFRSDKPALLLLPAAACLLVFAYLLTKIDTATAGRAYAVYGGIYIVCSLAWMYGIEKFSPDIWDYIGVGICLIGASVILFAPR</sequence>
<reference key="1">
    <citation type="journal article" date="2007" name="Appl. Environ. Microbiol.">
        <title>Genome sequence of the cellulolytic gliding bacterium Cytophaga hutchinsonii.</title>
        <authorList>
            <person name="Xie G."/>
            <person name="Bruce D.C."/>
            <person name="Challacombe J.F."/>
            <person name="Chertkov O."/>
            <person name="Detter J.C."/>
            <person name="Gilna P."/>
            <person name="Han C.S."/>
            <person name="Lucas S."/>
            <person name="Misra M."/>
            <person name="Myers G.L."/>
            <person name="Richardson P."/>
            <person name="Tapia R."/>
            <person name="Thayer N."/>
            <person name="Thompson L.S."/>
            <person name="Brettin T.S."/>
            <person name="Henrissat B."/>
            <person name="Wilson D.B."/>
            <person name="McBride M.J."/>
        </authorList>
    </citation>
    <scope>NUCLEOTIDE SEQUENCE [LARGE SCALE GENOMIC DNA]</scope>
    <source>
        <strain>ATCC 33406 / DSM 1761 / JCM 20678 / CIP 103989 / IAM 12607 / NBRC 15051 / NCIMB 9469 / D465</strain>
    </source>
</reference>
<proteinExistence type="inferred from homology"/>
<dbReference type="EMBL" id="CP000383">
    <property type="protein sequence ID" value="ABG60567.1"/>
    <property type="molecule type" value="Genomic_DNA"/>
</dbReference>
<dbReference type="RefSeq" id="WP_011586675.1">
    <property type="nucleotide sequence ID" value="NC_008255.1"/>
</dbReference>
<dbReference type="SMR" id="Q11PU6"/>
<dbReference type="STRING" id="269798.CHU_3331"/>
<dbReference type="KEGG" id="chu:CHU_3331"/>
<dbReference type="eggNOG" id="COG1742">
    <property type="taxonomic scope" value="Bacteria"/>
</dbReference>
<dbReference type="HOGENOM" id="CLU_117653_1_0_10"/>
<dbReference type="OrthoDB" id="123240at2"/>
<dbReference type="Proteomes" id="UP000001822">
    <property type="component" value="Chromosome"/>
</dbReference>
<dbReference type="GO" id="GO:0005886">
    <property type="term" value="C:plasma membrane"/>
    <property type="evidence" value="ECO:0007669"/>
    <property type="project" value="UniProtKB-SubCell"/>
</dbReference>
<dbReference type="HAMAP" id="MF_00010">
    <property type="entry name" value="UPF0060"/>
    <property type="match status" value="1"/>
</dbReference>
<dbReference type="InterPro" id="IPR003844">
    <property type="entry name" value="UPF0060"/>
</dbReference>
<dbReference type="NCBIfam" id="NF002586">
    <property type="entry name" value="PRK02237.1"/>
    <property type="match status" value="1"/>
</dbReference>
<dbReference type="PANTHER" id="PTHR36116">
    <property type="entry name" value="UPF0060 MEMBRANE PROTEIN YNFA"/>
    <property type="match status" value="1"/>
</dbReference>
<dbReference type="PANTHER" id="PTHR36116:SF1">
    <property type="entry name" value="UPF0060 MEMBRANE PROTEIN YNFA"/>
    <property type="match status" value="1"/>
</dbReference>
<dbReference type="Pfam" id="PF02694">
    <property type="entry name" value="UPF0060"/>
    <property type="match status" value="1"/>
</dbReference>
<dbReference type="SUPFAM" id="SSF103481">
    <property type="entry name" value="Multidrug resistance efflux transporter EmrE"/>
    <property type="match status" value="1"/>
</dbReference>
<feature type="chain" id="PRO_0000282218" description="UPF0060 membrane protein CHU_3331">
    <location>
        <begin position="1"/>
        <end position="106"/>
    </location>
</feature>
<feature type="transmembrane region" description="Helical" evidence="1">
    <location>
        <begin position="5"/>
        <end position="25"/>
    </location>
</feature>
<feature type="transmembrane region" description="Helical" evidence="1">
    <location>
        <begin position="31"/>
        <end position="51"/>
    </location>
</feature>
<feature type="transmembrane region" description="Helical" evidence="1">
    <location>
        <begin position="59"/>
        <end position="79"/>
    </location>
</feature>
<feature type="transmembrane region" description="Helical" evidence="1">
    <location>
        <begin position="85"/>
        <end position="105"/>
    </location>
</feature>